<feature type="chain" id="PRO_0000440323" description="Short chain dehydrogenase citE">
    <location>
        <begin position="1"/>
        <end position="292"/>
    </location>
</feature>
<feature type="active site" description="Proton donor" evidence="2">
    <location>
        <position position="188"/>
    </location>
</feature>
<feature type="active site" description="Lowers pKa of active site Tyr" evidence="2">
    <location>
        <position position="192"/>
    </location>
</feature>
<feature type="binding site" evidence="1">
    <location>
        <position position="37"/>
    </location>
    <ligand>
        <name>NADP(+)</name>
        <dbReference type="ChEBI" id="CHEBI:58349"/>
    </ligand>
</feature>
<feature type="binding site" evidence="1">
    <location>
        <position position="95"/>
    </location>
    <ligand>
        <name>NADP(+)</name>
        <dbReference type="ChEBI" id="CHEBI:58349"/>
    </ligand>
</feature>
<feature type="binding site" evidence="2">
    <location>
        <position position="122"/>
    </location>
    <ligand>
        <name>NADP(+)</name>
        <dbReference type="ChEBI" id="CHEBI:58349"/>
    </ligand>
</feature>
<feature type="binding site" evidence="1">
    <location>
        <position position="156"/>
    </location>
    <ligand>
        <name>NADP(+)</name>
        <dbReference type="ChEBI" id="CHEBI:58349"/>
    </ligand>
</feature>
<feature type="binding site" evidence="2">
    <location>
        <position position="188"/>
    </location>
    <ligand>
        <name>NADP(+)</name>
        <dbReference type="ChEBI" id="CHEBI:58349"/>
    </ligand>
</feature>
<feature type="binding site" evidence="2">
    <location>
        <position position="192"/>
    </location>
    <ligand>
        <name>NADP(+)</name>
        <dbReference type="ChEBI" id="CHEBI:58349"/>
    </ligand>
</feature>
<feature type="binding site" evidence="2">
    <location>
        <position position="221"/>
    </location>
    <ligand>
        <name>NADP(+)</name>
        <dbReference type="ChEBI" id="CHEBI:58349"/>
    </ligand>
</feature>
<feature type="binding site" evidence="1">
    <location>
        <position position="223"/>
    </location>
    <ligand>
        <name>NADP(+)</name>
        <dbReference type="ChEBI" id="CHEBI:58349"/>
    </ligand>
</feature>
<name>CITE_MONRU</name>
<organism>
    <name type="scientific">Monascus ruber</name>
    <name type="common">Mold</name>
    <dbReference type="NCBI Taxonomy" id="89489"/>
    <lineage>
        <taxon>Eukaryota</taxon>
        <taxon>Fungi</taxon>
        <taxon>Dikarya</taxon>
        <taxon>Ascomycota</taxon>
        <taxon>Pezizomycotina</taxon>
        <taxon>Eurotiomycetes</taxon>
        <taxon>Eurotiomycetidae</taxon>
        <taxon>Eurotiales</taxon>
        <taxon>Aspergillaceae</taxon>
        <taxon>Monascus</taxon>
    </lineage>
</organism>
<reference key="1">
    <citation type="journal article" date="2016" name="Chem. Sci.">
        <title>The molecular steps of citrinin biosynthesis in fungi.</title>
        <authorList>
            <person name="He Y."/>
            <person name="Cox R.J."/>
        </authorList>
    </citation>
    <scope>NUCLEOTIDE SEQUENCE [GENOMIC DNA]</scope>
    <scope>DISRUPTION PHENOTYPE</scope>
    <scope>FUNCTION</scope>
    <scope>CATALYTIC ACTIVITY</scope>
    <scope>PATHWAY</scope>
    <source>
        <strain>M7</strain>
    </source>
</reference>
<reference key="2">
    <citation type="journal article" date="2017" name="Chem. Commun. (Camb.)">
        <title>In trans hydrolysis of carrier protein-bound acyl intermediates by CitA during citrinin biosynthesis.</title>
        <authorList>
            <person name="Storm P.A."/>
            <person name="Townsend C.A."/>
        </authorList>
    </citation>
    <scope>FUNCTION</scope>
</reference>
<comment type="function">
    <text evidence="3 4">Short chain dehydrogenase; part of the gene cluster that mediates the biosynthesis of the mycotoxin citrinin, a hepato-nephrotoxic compound to humans due to inhibition of respiration complex III (Ref.1). The pathway begins with the synthesis of a keto-aldehyde intermediate by the citrinin PKS (pksCT also named citS) from successive condensations of 4 malonyl-CoA units, presumably with a simple acetyl-CoA starter unit (Ref.1). Release of the keto-aldehyde intermediate is consistent with the presence of the C-terminal reductive release domain (Ref.1). CitA collaborates with citS by catalyzing the hydrolysis of ACP-bound acyl intermediates to free the ACP from stalled intermediates (PubMed:29189834). CitB then catalyzes the oxidation of the C-12 methyl of the ketone intermediate to an alcohol intermediate which is further oxidized by the oxidoreductase citC to produce a bisaldehyde intermediate (Ref.1). The fourth catalytic step is catalyzed by the citD aldehyde dehydrogenase (Ref.1). The final transformation is the reduction of C-3 by citE to provide the chemically stable citrinin nucleus (Ref.1). CitE appears highly selective for its substrate as its presence in any context other than a full complement of citS and citA-D does not result in observable new compounds (Ref.1).</text>
</comment>
<comment type="pathway">
    <text evidence="4">Mycotoxin biosynthesis.</text>
</comment>
<comment type="disruption phenotype">
    <text evidence="4">Leads to complete absence of citrinin production (Ref.1).</text>
</comment>
<comment type="similarity">
    <text evidence="6">Belongs to the short-chain dehydrogenases/reductases (SDR) family.</text>
</comment>
<accession>A0A162J3X8</accession>
<evidence type="ECO:0000250" key="1">
    <source>
        <dbReference type="UniProtKB" id="L0E2Z4"/>
    </source>
</evidence>
<evidence type="ECO:0000250" key="2">
    <source>
        <dbReference type="UniProtKB" id="O93868"/>
    </source>
</evidence>
<evidence type="ECO:0000269" key="3">
    <source>
    </source>
</evidence>
<evidence type="ECO:0000269" key="4">
    <source ref="1"/>
</evidence>
<evidence type="ECO:0000303" key="5">
    <source ref="1"/>
</evidence>
<evidence type="ECO:0000305" key="6"/>
<evidence type="ECO:0000305" key="7">
    <source ref="1"/>
</evidence>
<keyword id="KW-0521">NADP</keyword>
<keyword id="KW-0560">Oxidoreductase</keyword>
<sequence length="292" mass="31351">MAFPPSAGFTWISKTHNDTYPTITAAKCKQHGRAVFVTGASKGIGRVTAVAFAQAGAPSLALGARSSLDAAETAVLDAAKSAGHPPPQVLKLTLDVADEQSVADAAARVERAFGRLDILVNNAGRVEKWVPLAETDPKSWWATWEVNLKGTYLMTRAMLPLLLKGGEKTIVNMNSIGAHLTRPGASAYQTGKLAMLRLTQFTCVEYAAQGVLAFAIHPGAVDTELASNLPEDTKAKLVDSPELCADTIVWLTQEKQSWLAGRYLSANWDVAELMARKEEILQGDKLKVKLVL</sequence>
<protein>
    <recommendedName>
        <fullName evidence="5">Short chain dehydrogenase citE</fullName>
        <ecNumber evidence="7">1.1.1.-</ecNumber>
    </recommendedName>
    <alternativeName>
        <fullName evidence="5">Citrinin synthesis protein E</fullName>
    </alternativeName>
</protein>
<proteinExistence type="evidence at protein level"/>
<gene>
    <name evidence="5" type="primary">citE</name>
    <name evidence="5" type="synonym">mrl6</name>
</gene>
<dbReference type="EC" id="1.1.1.-" evidence="7"/>
<dbReference type="EMBL" id="KT781075">
    <property type="protein sequence ID" value="ALI92649.1"/>
    <property type="molecule type" value="Genomic_DNA"/>
</dbReference>
<dbReference type="SMR" id="A0A162J3X8"/>
<dbReference type="GO" id="GO:0016616">
    <property type="term" value="F:oxidoreductase activity, acting on the CH-OH group of donors, NAD or NADP as acceptor"/>
    <property type="evidence" value="ECO:0007669"/>
    <property type="project" value="TreeGrafter"/>
</dbReference>
<dbReference type="CDD" id="cd05233">
    <property type="entry name" value="SDR_c"/>
    <property type="match status" value="1"/>
</dbReference>
<dbReference type="FunFam" id="3.40.50.720:FF:000905">
    <property type="entry name" value="Oxidoreductase, short chain dehydrogenase/reductase family, putative"/>
    <property type="match status" value="1"/>
</dbReference>
<dbReference type="Gene3D" id="3.40.50.720">
    <property type="entry name" value="NAD(P)-binding Rossmann-like Domain"/>
    <property type="match status" value="1"/>
</dbReference>
<dbReference type="InterPro" id="IPR036291">
    <property type="entry name" value="NAD(P)-bd_dom_sf"/>
</dbReference>
<dbReference type="InterPro" id="IPR002347">
    <property type="entry name" value="SDR_fam"/>
</dbReference>
<dbReference type="PANTHER" id="PTHR42760:SF37">
    <property type="entry name" value="CLAVALDEHYDE DEHYDROGENASE"/>
    <property type="match status" value="1"/>
</dbReference>
<dbReference type="PANTHER" id="PTHR42760">
    <property type="entry name" value="SHORT-CHAIN DEHYDROGENASES/REDUCTASES FAMILY MEMBER"/>
    <property type="match status" value="1"/>
</dbReference>
<dbReference type="Pfam" id="PF00106">
    <property type="entry name" value="adh_short"/>
    <property type="match status" value="1"/>
</dbReference>
<dbReference type="PRINTS" id="PR00081">
    <property type="entry name" value="GDHRDH"/>
</dbReference>
<dbReference type="PRINTS" id="PR00080">
    <property type="entry name" value="SDRFAMILY"/>
</dbReference>
<dbReference type="SUPFAM" id="SSF51735">
    <property type="entry name" value="NAD(P)-binding Rossmann-fold domains"/>
    <property type="match status" value="1"/>
</dbReference>